<dbReference type="EMBL" id="CP000771">
    <property type="protein sequence ID" value="ABS60972.1"/>
    <property type="molecule type" value="Genomic_DNA"/>
</dbReference>
<dbReference type="RefSeq" id="WP_011994285.1">
    <property type="nucleotide sequence ID" value="NC_009718.1"/>
</dbReference>
<dbReference type="SMR" id="A7HM39"/>
<dbReference type="STRING" id="381764.Fnod_1125"/>
<dbReference type="KEGG" id="fno:Fnod_1125"/>
<dbReference type="eggNOG" id="COG0199">
    <property type="taxonomic scope" value="Bacteria"/>
</dbReference>
<dbReference type="HOGENOM" id="CLU_139869_3_0_0"/>
<dbReference type="OrthoDB" id="9810484at2"/>
<dbReference type="Proteomes" id="UP000002415">
    <property type="component" value="Chromosome"/>
</dbReference>
<dbReference type="GO" id="GO:0005737">
    <property type="term" value="C:cytoplasm"/>
    <property type="evidence" value="ECO:0007669"/>
    <property type="project" value="UniProtKB-ARBA"/>
</dbReference>
<dbReference type="GO" id="GO:0015935">
    <property type="term" value="C:small ribosomal subunit"/>
    <property type="evidence" value="ECO:0007669"/>
    <property type="project" value="TreeGrafter"/>
</dbReference>
<dbReference type="GO" id="GO:0019843">
    <property type="term" value="F:rRNA binding"/>
    <property type="evidence" value="ECO:0007669"/>
    <property type="project" value="UniProtKB-UniRule"/>
</dbReference>
<dbReference type="GO" id="GO:0003735">
    <property type="term" value="F:structural constituent of ribosome"/>
    <property type="evidence" value="ECO:0007669"/>
    <property type="project" value="InterPro"/>
</dbReference>
<dbReference type="GO" id="GO:0008270">
    <property type="term" value="F:zinc ion binding"/>
    <property type="evidence" value="ECO:0007669"/>
    <property type="project" value="UniProtKB-UniRule"/>
</dbReference>
<dbReference type="GO" id="GO:0006412">
    <property type="term" value="P:translation"/>
    <property type="evidence" value="ECO:0007669"/>
    <property type="project" value="UniProtKB-UniRule"/>
</dbReference>
<dbReference type="FunFam" id="4.10.830.10:FF:000001">
    <property type="entry name" value="30S ribosomal protein S14 type Z"/>
    <property type="match status" value="1"/>
</dbReference>
<dbReference type="Gene3D" id="4.10.830.10">
    <property type="entry name" value="30s Ribosomal Protein S14, Chain N"/>
    <property type="match status" value="1"/>
</dbReference>
<dbReference type="HAMAP" id="MF_01364_B">
    <property type="entry name" value="Ribosomal_uS14_2_B"/>
    <property type="match status" value="1"/>
</dbReference>
<dbReference type="InterPro" id="IPR001209">
    <property type="entry name" value="Ribosomal_uS14"/>
</dbReference>
<dbReference type="InterPro" id="IPR023053">
    <property type="entry name" value="Ribosomal_uS14_bact"/>
</dbReference>
<dbReference type="InterPro" id="IPR018271">
    <property type="entry name" value="Ribosomal_uS14_CS"/>
</dbReference>
<dbReference type="InterPro" id="IPR043140">
    <property type="entry name" value="Ribosomal_uS14_sf"/>
</dbReference>
<dbReference type="NCBIfam" id="NF005974">
    <property type="entry name" value="PRK08061.1"/>
    <property type="match status" value="1"/>
</dbReference>
<dbReference type="PANTHER" id="PTHR19836">
    <property type="entry name" value="30S RIBOSOMAL PROTEIN S14"/>
    <property type="match status" value="1"/>
</dbReference>
<dbReference type="PANTHER" id="PTHR19836:SF19">
    <property type="entry name" value="SMALL RIBOSOMAL SUBUNIT PROTEIN US14M"/>
    <property type="match status" value="1"/>
</dbReference>
<dbReference type="Pfam" id="PF00253">
    <property type="entry name" value="Ribosomal_S14"/>
    <property type="match status" value="1"/>
</dbReference>
<dbReference type="SUPFAM" id="SSF57716">
    <property type="entry name" value="Glucocorticoid receptor-like (DNA-binding domain)"/>
    <property type="match status" value="1"/>
</dbReference>
<dbReference type="PROSITE" id="PS00527">
    <property type="entry name" value="RIBOSOMAL_S14"/>
    <property type="match status" value="1"/>
</dbReference>
<protein>
    <recommendedName>
        <fullName evidence="1">Small ribosomal subunit protein uS14</fullName>
    </recommendedName>
    <alternativeName>
        <fullName evidence="2">30S ribosomal protein S14 type Z</fullName>
    </alternativeName>
</protein>
<sequence>MAKKSMVERWKKPKKFKVREYTRCSICGRVHSVYREFGICRVCFRKMANEGKLPGVRKASW</sequence>
<name>RS14Z_FERNB</name>
<feature type="chain" id="PRO_1000073397" description="Small ribosomal subunit protein uS14">
    <location>
        <begin position="1"/>
        <end position="61"/>
    </location>
</feature>
<feature type="binding site" evidence="1">
    <location>
        <position position="24"/>
    </location>
    <ligand>
        <name>Zn(2+)</name>
        <dbReference type="ChEBI" id="CHEBI:29105"/>
    </ligand>
</feature>
<feature type="binding site" evidence="1">
    <location>
        <position position="27"/>
    </location>
    <ligand>
        <name>Zn(2+)</name>
        <dbReference type="ChEBI" id="CHEBI:29105"/>
    </ligand>
</feature>
<feature type="binding site" evidence="1">
    <location>
        <position position="40"/>
    </location>
    <ligand>
        <name>Zn(2+)</name>
        <dbReference type="ChEBI" id="CHEBI:29105"/>
    </ligand>
</feature>
<feature type="binding site" evidence="1">
    <location>
        <position position="43"/>
    </location>
    <ligand>
        <name>Zn(2+)</name>
        <dbReference type="ChEBI" id="CHEBI:29105"/>
    </ligand>
</feature>
<keyword id="KW-0479">Metal-binding</keyword>
<keyword id="KW-1185">Reference proteome</keyword>
<keyword id="KW-0687">Ribonucleoprotein</keyword>
<keyword id="KW-0689">Ribosomal protein</keyword>
<keyword id="KW-0694">RNA-binding</keyword>
<keyword id="KW-0699">rRNA-binding</keyword>
<keyword id="KW-0862">Zinc</keyword>
<comment type="function">
    <text evidence="1">Binds 16S rRNA, required for the assembly of 30S particles and may also be responsible for determining the conformation of the 16S rRNA at the A site.</text>
</comment>
<comment type="cofactor">
    <cofactor evidence="1">
        <name>Zn(2+)</name>
        <dbReference type="ChEBI" id="CHEBI:29105"/>
    </cofactor>
    <text evidence="1">Binds 1 zinc ion per subunit.</text>
</comment>
<comment type="subunit">
    <text evidence="1">Part of the 30S ribosomal subunit. Contacts proteins S3 and S10.</text>
</comment>
<comment type="similarity">
    <text evidence="1">Belongs to the universal ribosomal protein uS14 family. Zinc-binding uS14 subfamily.</text>
</comment>
<reference key="1">
    <citation type="submission" date="2007-07" db="EMBL/GenBank/DDBJ databases">
        <title>Complete sequence of Fervidobacterium nodosum Rt17-B1.</title>
        <authorList>
            <consortium name="US DOE Joint Genome Institute"/>
            <person name="Copeland A."/>
            <person name="Lucas S."/>
            <person name="Lapidus A."/>
            <person name="Barry K."/>
            <person name="Glavina del Rio T."/>
            <person name="Dalin E."/>
            <person name="Tice H."/>
            <person name="Pitluck S."/>
            <person name="Saunders E."/>
            <person name="Brettin T."/>
            <person name="Bruce D."/>
            <person name="Detter J.C."/>
            <person name="Han C."/>
            <person name="Schmutz J."/>
            <person name="Larimer F."/>
            <person name="Land M."/>
            <person name="Hauser L."/>
            <person name="Kyrpides N."/>
            <person name="Mikhailova N."/>
            <person name="Nelson K."/>
            <person name="Gogarten J.P."/>
            <person name="Noll K."/>
            <person name="Richardson P."/>
        </authorList>
    </citation>
    <scope>NUCLEOTIDE SEQUENCE [LARGE SCALE GENOMIC DNA]</scope>
    <source>
        <strain>ATCC 35602 / DSM 5306 / Rt17-B1</strain>
    </source>
</reference>
<organism>
    <name type="scientific">Fervidobacterium nodosum (strain ATCC 35602 / DSM 5306 / Rt17-B1)</name>
    <dbReference type="NCBI Taxonomy" id="381764"/>
    <lineage>
        <taxon>Bacteria</taxon>
        <taxon>Thermotogati</taxon>
        <taxon>Thermotogota</taxon>
        <taxon>Thermotogae</taxon>
        <taxon>Thermotogales</taxon>
        <taxon>Fervidobacteriaceae</taxon>
        <taxon>Fervidobacterium</taxon>
    </lineage>
</organism>
<evidence type="ECO:0000255" key="1">
    <source>
        <dbReference type="HAMAP-Rule" id="MF_01364"/>
    </source>
</evidence>
<evidence type="ECO:0000305" key="2"/>
<proteinExistence type="inferred from homology"/>
<gene>
    <name evidence="1" type="primary">rpsZ</name>
    <name evidence="1" type="synonym">rpsN</name>
    <name type="ordered locus">Fnod_1125</name>
</gene>
<accession>A7HM39</accession>